<protein>
    <recommendedName>
        <fullName evidence="8">Cyclin-A2</fullName>
        <shortName evidence="7">Cyclin-A</shortName>
    </recommendedName>
</protein>
<comment type="function">
    <text evidence="1">Cyclin which controls both the G1/S and the G2/M transition phases of the cell cycle. Functions through the formation of specific serine/threonine kinase holoenzyme complexes with the cyclin-dependent protein kinases CDK1 and CDK2. The cyclin subunit confers the substrate specificity of these complexes and differentially interacts with and activates CDK1 and CDK2 throughout the cell cycle.</text>
</comment>
<comment type="subunit">
    <text evidence="1 3">Interacts with the CDK1 and CDK2 protein kinases to form serine/threonine kinase holoenzyme complexes (PubMed:10068472). Interacts with CDK1 (hyperphosphorylated form in G1 and underphosphorylated forms in S and G2). Interacts with CDK2; the interaction increases from G1 to G2. Interacts (associated with CDK2 but not with CDK1) with SCAPER; regulates the activity of CCNA2/CDK2 by transiently maintaining CCNA2 in the cytoplasm. Forms a ternary complex with CDK2 and CDKN1B; CDKN1B inhibits the kinase activity of CDK2 through conformational rearrangements (By similarity). Interacts with INCA1 (By similarity).</text>
</comment>
<comment type="subunit">
    <text evidence="4">(Microbial infection) Interacts with mouse cytomegalovirus/MCMV kinase M97; this interaction sequesters CCNA2 to the cytoplasm.</text>
</comment>
<comment type="interaction">
    <interactant intactId="EBI-846980">
        <id>P51943</id>
    </interactant>
    <interactant intactId="EBI-846949">
        <id>P11440</id>
        <label>Cdk1</label>
    </interactant>
    <organismsDiffer>false</organismsDiffer>
    <experiments>2</experiments>
</comment>
<comment type="interaction">
    <interactant intactId="EBI-846980">
        <id>P51943</id>
    </interactant>
    <interactant intactId="EBI-847048">
        <id>P97377</id>
        <label>Cdk2</label>
    </interactant>
    <organismsDiffer>false</organismsDiffer>
    <experiments>3</experiments>
</comment>
<comment type="interaction">
    <interactant intactId="EBI-846980">
        <id>P51943</id>
    </interactant>
    <interactant intactId="EBI-375096">
        <id>P24941</id>
        <label>CDK2</label>
    </interactant>
    <organismsDiffer>true</organismsDiffer>
    <experiments>2</experiments>
</comment>
<comment type="subcellular location">
    <subcellularLocation>
        <location evidence="4">Nucleus</location>
    </subcellularLocation>
    <subcellularLocation>
        <location evidence="4">Cytoplasm</location>
    </subcellularLocation>
    <text evidence="1">Exclusively nuclear during interphase. Detected in the nucleus and the cytoplasm at prophase. Cytoplasmic when associated with SCAPER.</text>
</comment>
<comment type="tissue specificity">
    <text evidence="3 5 6">Ubiquitous (PubMed:8565853). In the testis, expressed in germ cells and in the ovary, in both germline and somatic cells (PubMed:10068472, PubMed:8575639).</text>
</comment>
<comment type="developmental stage">
    <text evidence="3 5 6">Accumulates steadily during G2 and is abruptly destroyed at mitosis. Expressed in spermatogonia and is most abundant in preleptotene spermatocytes, cells which will enter the meiotic pathway.</text>
</comment>
<comment type="PTM">
    <text evidence="1">Polyubiquitinated via 'Lys-11'-linked ubiquitin by the anaphase-promoting complex (APC/C), leading to its degradation by the proteasome. Deubiquitinated and stabilized by USP37 enables entry into S phase. Ubiquitinated during the G1 phase by the SCF(FBXO31) complex, leading to its proteasomal degradation.</text>
</comment>
<comment type="similarity">
    <text evidence="9">Belongs to the cyclin family. Cyclin AB subfamily.</text>
</comment>
<proteinExistence type="evidence at protein level"/>
<organism>
    <name type="scientific">Mus musculus</name>
    <name type="common">Mouse</name>
    <dbReference type="NCBI Taxonomy" id="10090"/>
    <lineage>
        <taxon>Eukaryota</taxon>
        <taxon>Metazoa</taxon>
        <taxon>Chordata</taxon>
        <taxon>Craniata</taxon>
        <taxon>Vertebrata</taxon>
        <taxon>Euteleostomi</taxon>
        <taxon>Mammalia</taxon>
        <taxon>Eutheria</taxon>
        <taxon>Euarchontoglires</taxon>
        <taxon>Glires</taxon>
        <taxon>Rodentia</taxon>
        <taxon>Myomorpha</taxon>
        <taxon>Muroidea</taxon>
        <taxon>Muridae</taxon>
        <taxon>Murinae</taxon>
        <taxon>Mus</taxon>
        <taxon>Mus</taxon>
    </lineage>
</organism>
<sequence>MPGTSRHSGRDAGSALLSLHQEDQENVNPEKLAPAQQPRAQAVLKAGNVRGPAPQQKLKTRRVAPLKDLPINDEHVTAGPSWKAVSKQPAFTIHVDEAEETQKRPAELKETECEDALAFNAAVSLPGARKPLTPLDYPMDGSFESPHAMDMSIVLEDKPVNVNEVPDYQEDIHTYLREMEVKCKPKVGYMKRQPDITNSMRAILVDWLVEVGEEYKLQNETLHLAVNYIDRFLSSMSVLRGKLQLVGTAAMLLASKFEEIYPPEVAEFVYITDDTYSKKQVLRMEHLVLKVLAFDLAAPTVNQFLTQYFLHLQPANCKVESLAMFLGELSLIDADPYLKYLPSLIAGAAFHLALYTVTGQSWPESLAQQTGYTLESLKPCLVDLHQTYLKAPQHAQQSIREKYKHSKYHSVSLLNPPETLSV</sequence>
<gene>
    <name evidence="10" type="primary">Ccna2</name>
    <name type="synonym">Ccna</name>
    <name type="synonym">Cyca</name>
    <name evidence="8" type="synonym">Cyca2</name>
</gene>
<accession>P51943</accession>
<accession>Q61459</accession>
<accession>Q8BRG1</accession>
<reference key="1">
    <citation type="journal article" date="1996" name="Dev. Biol.">
        <title>The developmentally restricted pattern of expression in the male germ line of a murine cyclin A, cyclin A2, suggests roles in both mitotic and meiotic cell cycles.</title>
        <authorList>
            <person name="Ravnik S.E."/>
            <person name="Wolgemuth D.J."/>
        </authorList>
    </citation>
    <scope>NUCLEOTIDE SEQUENCE [MRNA]</scope>
    <scope>TISSUE SPECIFICITY</scope>
    <scope>DEVELOPMENTAL STAGE</scope>
</reference>
<reference key="2">
    <citation type="journal article" date="1996" name="Development">
        <title>A distinct cyclin A is expressed in germ cells in the mouse.</title>
        <authorList>
            <person name="Sweeney C."/>
            <person name="Murphy M."/>
            <person name="Kubelka M."/>
            <person name="Ravnik S.E."/>
            <person name="Hawkins C.F."/>
            <person name="Wolgemuth D.J."/>
            <person name="Carrington M."/>
        </authorList>
    </citation>
    <scope>NUCLEOTIDE SEQUENCE [MRNA]</scope>
    <scope>TISSUE SPECIFICITY</scope>
    <scope>DEVELOPMENTAL STAGE</scope>
    <source>
        <tissue>Thymus</tissue>
    </source>
</reference>
<reference key="3">
    <citation type="journal article" date="2005" name="Science">
        <title>The transcriptional landscape of the mammalian genome.</title>
        <authorList>
            <person name="Carninci P."/>
            <person name="Kasukawa T."/>
            <person name="Katayama S."/>
            <person name="Gough J."/>
            <person name="Frith M.C."/>
            <person name="Maeda N."/>
            <person name="Oyama R."/>
            <person name="Ravasi T."/>
            <person name="Lenhard B."/>
            <person name="Wells C."/>
            <person name="Kodzius R."/>
            <person name="Shimokawa K."/>
            <person name="Bajic V.B."/>
            <person name="Brenner S.E."/>
            <person name="Batalov S."/>
            <person name="Forrest A.R."/>
            <person name="Zavolan M."/>
            <person name="Davis M.J."/>
            <person name="Wilming L.G."/>
            <person name="Aidinis V."/>
            <person name="Allen J.E."/>
            <person name="Ambesi-Impiombato A."/>
            <person name="Apweiler R."/>
            <person name="Aturaliya R.N."/>
            <person name="Bailey T.L."/>
            <person name="Bansal M."/>
            <person name="Baxter L."/>
            <person name="Beisel K.W."/>
            <person name="Bersano T."/>
            <person name="Bono H."/>
            <person name="Chalk A.M."/>
            <person name="Chiu K.P."/>
            <person name="Choudhary V."/>
            <person name="Christoffels A."/>
            <person name="Clutterbuck D.R."/>
            <person name="Crowe M.L."/>
            <person name="Dalla E."/>
            <person name="Dalrymple B.P."/>
            <person name="de Bono B."/>
            <person name="Della Gatta G."/>
            <person name="di Bernardo D."/>
            <person name="Down T."/>
            <person name="Engstrom P."/>
            <person name="Fagiolini M."/>
            <person name="Faulkner G."/>
            <person name="Fletcher C.F."/>
            <person name="Fukushima T."/>
            <person name="Furuno M."/>
            <person name="Futaki S."/>
            <person name="Gariboldi M."/>
            <person name="Georgii-Hemming P."/>
            <person name="Gingeras T.R."/>
            <person name="Gojobori T."/>
            <person name="Green R.E."/>
            <person name="Gustincich S."/>
            <person name="Harbers M."/>
            <person name="Hayashi Y."/>
            <person name="Hensch T.K."/>
            <person name="Hirokawa N."/>
            <person name="Hill D."/>
            <person name="Huminiecki L."/>
            <person name="Iacono M."/>
            <person name="Ikeo K."/>
            <person name="Iwama A."/>
            <person name="Ishikawa T."/>
            <person name="Jakt M."/>
            <person name="Kanapin A."/>
            <person name="Katoh M."/>
            <person name="Kawasawa Y."/>
            <person name="Kelso J."/>
            <person name="Kitamura H."/>
            <person name="Kitano H."/>
            <person name="Kollias G."/>
            <person name="Krishnan S.P."/>
            <person name="Kruger A."/>
            <person name="Kummerfeld S.K."/>
            <person name="Kurochkin I.V."/>
            <person name="Lareau L.F."/>
            <person name="Lazarevic D."/>
            <person name="Lipovich L."/>
            <person name="Liu J."/>
            <person name="Liuni S."/>
            <person name="McWilliam S."/>
            <person name="Madan Babu M."/>
            <person name="Madera M."/>
            <person name="Marchionni L."/>
            <person name="Matsuda H."/>
            <person name="Matsuzawa S."/>
            <person name="Miki H."/>
            <person name="Mignone F."/>
            <person name="Miyake S."/>
            <person name="Morris K."/>
            <person name="Mottagui-Tabar S."/>
            <person name="Mulder N."/>
            <person name="Nakano N."/>
            <person name="Nakauchi H."/>
            <person name="Ng P."/>
            <person name="Nilsson R."/>
            <person name="Nishiguchi S."/>
            <person name="Nishikawa S."/>
            <person name="Nori F."/>
            <person name="Ohara O."/>
            <person name="Okazaki Y."/>
            <person name="Orlando V."/>
            <person name="Pang K.C."/>
            <person name="Pavan W.J."/>
            <person name="Pavesi G."/>
            <person name="Pesole G."/>
            <person name="Petrovsky N."/>
            <person name="Piazza S."/>
            <person name="Reed J."/>
            <person name="Reid J.F."/>
            <person name="Ring B.Z."/>
            <person name="Ringwald M."/>
            <person name="Rost B."/>
            <person name="Ruan Y."/>
            <person name="Salzberg S.L."/>
            <person name="Sandelin A."/>
            <person name="Schneider C."/>
            <person name="Schoenbach C."/>
            <person name="Sekiguchi K."/>
            <person name="Semple C.A."/>
            <person name="Seno S."/>
            <person name="Sessa L."/>
            <person name="Sheng Y."/>
            <person name="Shibata Y."/>
            <person name="Shimada H."/>
            <person name="Shimada K."/>
            <person name="Silva D."/>
            <person name="Sinclair B."/>
            <person name="Sperling S."/>
            <person name="Stupka E."/>
            <person name="Sugiura K."/>
            <person name="Sultana R."/>
            <person name="Takenaka Y."/>
            <person name="Taki K."/>
            <person name="Tammoja K."/>
            <person name="Tan S.L."/>
            <person name="Tang S."/>
            <person name="Taylor M.S."/>
            <person name="Tegner J."/>
            <person name="Teichmann S.A."/>
            <person name="Ueda H.R."/>
            <person name="van Nimwegen E."/>
            <person name="Verardo R."/>
            <person name="Wei C.L."/>
            <person name="Yagi K."/>
            <person name="Yamanishi H."/>
            <person name="Zabarovsky E."/>
            <person name="Zhu S."/>
            <person name="Zimmer A."/>
            <person name="Hide W."/>
            <person name="Bult C."/>
            <person name="Grimmond S.M."/>
            <person name="Teasdale R.D."/>
            <person name="Liu E.T."/>
            <person name="Brusic V."/>
            <person name="Quackenbush J."/>
            <person name="Wahlestedt C."/>
            <person name="Mattick J.S."/>
            <person name="Hume D.A."/>
            <person name="Kai C."/>
            <person name="Sasaki D."/>
            <person name="Tomaru Y."/>
            <person name="Fukuda S."/>
            <person name="Kanamori-Katayama M."/>
            <person name="Suzuki M."/>
            <person name="Aoki J."/>
            <person name="Arakawa T."/>
            <person name="Iida J."/>
            <person name="Imamura K."/>
            <person name="Itoh M."/>
            <person name="Kato T."/>
            <person name="Kawaji H."/>
            <person name="Kawagashira N."/>
            <person name="Kawashima T."/>
            <person name="Kojima M."/>
            <person name="Kondo S."/>
            <person name="Konno H."/>
            <person name="Nakano K."/>
            <person name="Ninomiya N."/>
            <person name="Nishio T."/>
            <person name="Okada M."/>
            <person name="Plessy C."/>
            <person name="Shibata K."/>
            <person name="Shiraki T."/>
            <person name="Suzuki S."/>
            <person name="Tagami M."/>
            <person name="Waki K."/>
            <person name="Watahiki A."/>
            <person name="Okamura-Oho Y."/>
            <person name="Suzuki H."/>
            <person name="Kawai J."/>
            <person name="Hayashizaki Y."/>
        </authorList>
    </citation>
    <scope>NUCLEOTIDE SEQUENCE [LARGE SCALE MRNA]</scope>
    <source>
        <strain>C57BL/6J</strain>
        <tissue>Embryo</tissue>
    </source>
</reference>
<reference key="4">
    <citation type="submission" date="2005-07" db="EMBL/GenBank/DDBJ databases">
        <authorList>
            <person name="Mural R.J."/>
            <person name="Adams M.D."/>
            <person name="Myers E.W."/>
            <person name="Smith H.O."/>
            <person name="Venter J.C."/>
        </authorList>
    </citation>
    <scope>NUCLEOTIDE SEQUENCE [LARGE SCALE GENOMIC DNA]</scope>
</reference>
<reference key="5">
    <citation type="journal article" date="2004" name="Genome Res.">
        <title>The status, quality, and expansion of the NIH full-length cDNA project: the Mammalian Gene Collection (MGC).</title>
        <authorList>
            <consortium name="The MGC Project Team"/>
        </authorList>
    </citation>
    <scope>NUCLEOTIDE SEQUENCE [LARGE SCALE MRNA]</scope>
</reference>
<reference key="6">
    <citation type="journal article" date="1999" name="Dev. Biol.">
        <title>Regulation of meiosis during mammalian spermatogenesis: the A-type cyclins and their associated cyclin-dependent kinases are differentially expressed in the germ-cell lineage.</title>
        <authorList>
            <person name="Ravnik S.E."/>
            <person name="Wolgemuth D.J."/>
        </authorList>
    </citation>
    <scope>INTERACTION WITH CDK2</scope>
    <scope>SUBCELLULAR LOCATION</scope>
    <scope>TISSUE SPECIFICITY</scope>
    <scope>DEVELOPMENTAL STAGE</scope>
    <source>
        <strain>Swiss Webster</strain>
    </source>
</reference>
<reference key="7">
    <citation type="journal article" date="2010" name="Cell">
        <title>A tissue-specific atlas of mouse protein phosphorylation and expression.</title>
        <authorList>
            <person name="Huttlin E.L."/>
            <person name="Jedrychowski M.P."/>
            <person name="Elias J.E."/>
            <person name="Goswami T."/>
            <person name="Rad R."/>
            <person name="Beausoleil S.A."/>
            <person name="Villen J."/>
            <person name="Haas W."/>
            <person name="Sowa M.E."/>
            <person name="Gygi S.P."/>
        </authorList>
    </citation>
    <scope>IDENTIFICATION BY MASS SPECTROMETRY [LARGE SCALE ANALYSIS]</scope>
    <source>
        <tissue>Spleen</tissue>
    </source>
</reference>
<reference key="8">
    <citation type="journal article" date="2020" name="Nat. Commun.">
        <title>Cross-regulation of viral kinases with cyclin A secures shutoff of host DNA synthesis.</title>
        <authorList>
            <person name="Bogdanow B."/>
            <person name="Schmidt M."/>
            <person name="Weisbach H."/>
            <person name="Gruska I."/>
            <person name="Vetter B."/>
            <person name="Imami K."/>
            <person name="Ostermann E."/>
            <person name="Brune W."/>
            <person name="Selbach M."/>
            <person name="Hagemeier C."/>
            <person name="Wiebusch L."/>
        </authorList>
    </citation>
    <scope>SUBCELLULAR LOCATION</scope>
    <scope>INTERACTION WITH MOUSE CYTOMEGALOVIRUS KINASE M97 (MICROBIAL INFECTION)</scope>
</reference>
<name>CCNA2_MOUSE</name>
<evidence type="ECO:0000250" key="1">
    <source>
        <dbReference type="UniProtKB" id="P20248"/>
    </source>
</evidence>
<evidence type="ECO:0000256" key="2">
    <source>
        <dbReference type="SAM" id="MobiDB-lite"/>
    </source>
</evidence>
<evidence type="ECO:0000269" key="3">
    <source>
    </source>
</evidence>
<evidence type="ECO:0000269" key="4">
    <source>
    </source>
</evidence>
<evidence type="ECO:0000269" key="5">
    <source>
    </source>
</evidence>
<evidence type="ECO:0000269" key="6">
    <source>
    </source>
</evidence>
<evidence type="ECO:0000303" key="7">
    <source>
    </source>
</evidence>
<evidence type="ECO:0000303" key="8">
    <source>
    </source>
</evidence>
<evidence type="ECO:0000305" key="9"/>
<evidence type="ECO:0000312" key="10">
    <source>
        <dbReference type="MGI" id="MGI:108069"/>
    </source>
</evidence>
<evidence type="ECO:0007829" key="11">
    <source>
        <dbReference type="PDB" id="3QHW"/>
    </source>
</evidence>
<dbReference type="EMBL" id="Z26580">
    <property type="protein sequence ID" value="CAA81331.1"/>
    <property type="molecule type" value="mRNA"/>
</dbReference>
<dbReference type="EMBL" id="X75483">
    <property type="protein sequence ID" value="CAA53212.1"/>
    <property type="molecule type" value="mRNA"/>
</dbReference>
<dbReference type="EMBL" id="AK044924">
    <property type="protein sequence ID" value="BAC32144.1"/>
    <property type="molecule type" value="mRNA"/>
</dbReference>
<dbReference type="EMBL" id="CH466530">
    <property type="protein sequence ID" value="EDL35081.1"/>
    <property type="molecule type" value="Genomic_DNA"/>
</dbReference>
<dbReference type="EMBL" id="BC052730">
    <property type="protein sequence ID" value="AAH52730.1"/>
    <property type="molecule type" value="mRNA"/>
</dbReference>
<dbReference type="CCDS" id="CCDS17313.1"/>
<dbReference type="PIR" id="S37280">
    <property type="entry name" value="S37280"/>
</dbReference>
<dbReference type="PIR" id="S38501">
    <property type="entry name" value="S38501"/>
</dbReference>
<dbReference type="RefSeq" id="NP_033958.2">
    <property type="nucleotide sequence ID" value="NM_009828.3"/>
</dbReference>
<dbReference type="RefSeq" id="XP_017174933.1">
    <property type="nucleotide sequence ID" value="XM_017319444.1"/>
</dbReference>
<dbReference type="PDB" id="3QHR">
    <property type="method" value="X-ray"/>
    <property type="resolution" value="2.17 A"/>
    <property type="chains" value="B/D=163-422"/>
</dbReference>
<dbReference type="PDB" id="3QHW">
    <property type="method" value="X-ray"/>
    <property type="resolution" value="1.91 A"/>
    <property type="chains" value="B/D=163-422"/>
</dbReference>
<dbReference type="PDB" id="4I3Z">
    <property type="method" value="X-ray"/>
    <property type="resolution" value="2.05 A"/>
    <property type="chains" value="B/D=165-421"/>
</dbReference>
<dbReference type="PDB" id="4II5">
    <property type="method" value="X-ray"/>
    <property type="resolution" value="2.15 A"/>
    <property type="chains" value="B/D=165-422"/>
</dbReference>
<dbReference type="PDBsum" id="3QHR"/>
<dbReference type="PDBsum" id="3QHW"/>
<dbReference type="PDBsum" id="4I3Z"/>
<dbReference type="PDBsum" id="4II5"/>
<dbReference type="SMR" id="P51943"/>
<dbReference type="BioGRID" id="198545">
    <property type="interactions" value="12"/>
</dbReference>
<dbReference type="ComplexPortal" id="CPX-2062">
    <property type="entry name" value="Cyclin A2-CDK1 complex"/>
</dbReference>
<dbReference type="ComplexPortal" id="CPX-2066">
    <property type="entry name" value="Cyclin A2-CDK2 complex"/>
</dbReference>
<dbReference type="CORUM" id="P51943"/>
<dbReference type="DIP" id="DIP-45864N"/>
<dbReference type="FunCoup" id="P51943">
    <property type="interactions" value="2463"/>
</dbReference>
<dbReference type="IntAct" id="P51943">
    <property type="interactions" value="4"/>
</dbReference>
<dbReference type="STRING" id="10090.ENSMUSP00000029270"/>
<dbReference type="GlyGen" id="P51943">
    <property type="glycosylation" value="1 site"/>
</dbReference>
<dbReference type="iPTMnet" id="P51943"/>
<dbReference type="PhosphoSitePlus" id="P51943"/>
<dbReference type="PaxDb" id="10090-ENSMUSP00000029270"/>
<dbReference type="PeptideAtlas" id="P51943"/>
<dbReference type="ProteomicsDB" id="280010"/>
<dbReference type="Pumba" id="P51943"/>
<dbReference type="Antibodypedia" id="3665">
    <property type="antibodies" value="802 antibodies from 44 providers"/>
</dbReference>
<dbReference type="DNASU" id="12428"/>
<dbReference type="Ensembl" id="ENSMUST00000029270.10">
    <property type="protein sequence ID" value="ENSMUSP00000029270.4"/>
    <property type="gene ID" value="ENSMUSG00000027715.10"/>
</dbReference>
<dbReference type="GeneID" id="12428"/>
<dbReference type="KEGG" id="mmu:12428"/>
<dbReference type="UCSC" id="uc012cov.1">
    <property type="organism name" value="mouse"/>
</dbReference>
<dbReference type="AGR" id="MGI:108069"/>
<dbReference type="CTD" id="890"/>
<dbReference type="MGI" id="MGI:108069">
    <property type="gene designation" value="Ccna2"/>
</dbReference>
<dbReference type="VEuPathDB" id="HostDB:ENSMUSG00000027715"/>
<dbReference type="eggNOG" id="KOG0654">
    <property type="taxonomic scope" value="Eukaryota"/>
</dbReference>
<dbReference type="GeneTree" id="ENSGT00940000155372"/>
<dbReference type="HOGENOM" id="CLU_020695_3_2_1"/>
<dbReference type="InParanoid" id="P51943"/>
<dbReference type="OMA" id="YCRAAQH"/>
<dbReference type="OrthoDB" id="5590282at2759"/>
<dbReference type="PhylomeDB" id="P51943"/>
<dbReference type="TreeFam" id="TF101002"/>
<dbReference type="Reactome" id="R-MMU-1538133">
    <property type="pathway name" value="G0 and Early G1"/>
</dbReference>
<dbReference type="Reactome" id="R-MMU-171319">
    <property type="pathway name" value="Telomere Extension By Telomerase"/>
</dbReference>
<dbReference type="Reactome" id="R-MMU-174184">
    <property type="pathway name" value="Cdc20:Phospho-APC/C mediated degradation of Cyclin A"/>
</dbReference>
<dbReference type="Reactome" id="R-MMU-176408">
    <property type="pathway name" value="Regulation of APC/C activators between G1/S and early anaphase"/>
</dbReference>
<dbReference type="Reactome" id="R-MMU-187577">
    <property type="pathway name" value="SCF(Skp2)-mediated degradation of p27/p21"/>
</dbReference>
<dbReference type="Reactome" id="R-MMU-2559582">
    <property type="pathway name" value="Senescence-Associated Secretory Phenotype (SASP)"/>
</dbReference>
<dbReference type="Reactome" id="R-MMU-2559586">
    <property type="pathway name" value="DNA Damage/Telomere Stress Induced Senescence"/>
</dbReference>
<dbReference type="Reactome" id="R-MMU-5689880">
    <property type="pathway name" value="Ub-specific processing proteases"/>
</dbReference>
<dbReference type="Reactome" id="R-MMU-5693607">
    <property type="pathway name" value="Processing of DNA double-strand break ends"/>
</dbReference>
<dbReference type="Reactome" id="R-MMU-6804116">
    <property type="pathway name" value="TP53 Regulates Transcription of Genes Involved in G1 Cell Cycle Arrest"/>
</dbReference>
<dbReference type="Reactome" id="R-MMU-6804756">
    <property type="pathway name" value="Regulation of TP53 Activity through Phosphorylation"/>
</dbReference>
<dbReference type="Reactome" id="R-MMU-6804757">
    <property type="pathway name" value="Regulation of TP53 Degradation"/>
</dbReference>
<dbReference type="Reactome" id="R-MMU-68911">
    <property type="pathway name" value="G2 Phase"/>
</dbReference>
<dbReference type="Reactome" id="R-MMU-68949">
    <property type="pathway name" value="Orc1 removal from chromatin"/>
</dbReference>
<dbReference type="Reactome" id="R-MMU-69017">
    <property type="pathway name" value="CDK-mediated phosphorylation and removal of Cdc6"/>
</dbReference>
<dbReference type="Reactome" id="R-MMU-69273">
    <property type="pathway name" value="Cyclin A/B1/B2 associated events during G2/M transition"/>
</dbReference>
<dbReference type="Reactome" id="R-MMU-69563">
    <property type="pathway name" value="p53-Dependent G1 DNA Damage Response"/>
</dbReference>
<dbReference type="Reactome" id="R-MMU-69656">
    <property type="pathway name" value="Cyclin A:Cdk2-associated events at S phase entry"/>
</dbReference>
<dbReference type="BioGRID-ORCS" id="12428">
    <property type="hits" value="25 hits in 79 CRISPR screens"/>
</dbReference>
<dbReference type="ChiTaRS" id="Ccna2">
    <property type="organism name" value="mouse"/>
</dbReference>
<dbReference type="EvolutionaryTrace" id="P51943"/>
<dbReference type="PRO" id="PR:P51943"/>
<dbReference type="Proteomes" id="UP000000589">
    <property type="component" value="Chromosome 3"/>
</dbReference>
<dbReference type="RNAct" id="P51943">
    <property type="molecule type" value="protein"/>
</dbReference>
<dbReference type="Bgee" id="ENSMUSG00000027715">
    <property type="expression patterns" value="Expressed in fetal liver hematopoietic progenitor cell and 221 other cell types or tissues"/>
</dbReference>
<dbReference type="ExpressionAtlas" id="P51943">
    <property type="expression patterns" value="baseline and differential"/>
</dbReference>
<dbReference type="GO" id="GO:0097122">
    <property type="term" value="C:cyclin A2-CDK1 complex"/>
    <property type="evidence" value="ECO:0000353"/>
    <property type="project" value="ComplexPortal"/>
</dbReference>
<dbReference type="GO" id="GO:0097124">
    <property type="term" value="C:cyclin A2-CDK2 complex"/>
    <property type="evidence" value="ECO:0000314"/>
    <property type="project" value="MGI"/>
</dbReference>
<dbReference type="GO" id="GO:0005737">
    <property type="term" value="C:cytoplasm"/>
    <property type="evidence" value="ECO:0000314"/>
    <property type="project" value="MGI"/>
</dbReference>
<dbReference type="GO" id="GO:0005829">
    <property type="term" value="C:cytosol"/>
    <property type="evidence" value="ECO:0007669"/>
    <property type="project" value="Ensembl"/>
</dbReference>
<dbReference type="GO" id="GO:0001939">
    <property type="term" value="C:female pronucleus"/>
    <property type="evidence" value="ECO:0000314"/>
    <property type="project" value="MGI"/>
</dbReference>
<dbReference type="GO" id="GO:0001940">
    <property type="term" value="C:male pronucleus"/>
    <property type="evidence" value="ECO:0000314"/>
    <property type="project" value="MGI"/>
</dbReference>
<dbReference type="GO" id="GO:0005654">
    <property type="term" value="C:nucleoplasm"/>
    <property type="evidence" value="ECO:0000304"/>
    <property type="project" value="Reactome"/>
</dbReference>
<dbReference type="GO" id="GO:0005634">
    <property type="term" value="C:nucleus"/>
    <property type="evidence" value="ECO:0000314"/>
    <property type="project" value="MGI"/>
</dbReference>
<dbReference type="GO" id="GO:0016538">
    <property type="term" value="F:cyclin-dependent protein serine/threonine kinase regulator activity"/>
    <property type="evidence" value="ECO:0000250"/>
    <property type="project" value="UniProtKB"/>
</dbReference>
<dbReference type="GO" id="GO:0019904">
    <property type="term" value="F:protein domain specific binding"/>
    <property type="evidence" value="ECO:0007669"/>
    <property type="project" value="Ensembl"/>
</dbReference>
<dbReference type="GO" id="GO:0019901">
    <property type="term" value="F:protein kinase binding"/>
    <property type="evidence" value="ECO:0000353"/>
    <property type="project" value="MGI"/>
</dbReference>
<dbReference type="GO" id="GO:0031100">
    <property type="term" value="P:animal organ regeneration"/>
    <property type="evidence" value="ECO:0007669"/>
    <property type="project" value="Ensembl"/>
</dbReference>
<dbReference type="GO" id="GO:0044843">
    <property type="term" value="P:cell cycle G1/S phase transition"/>
    <property type="evidence" value="ECO:0000250"/>
    <property type="project" value="UniProtKB"/>
</dbReference>
<dbReference type="GO" id="GO:0051301">
    <property type="term" value="P:cell division"/>
    <property type="evidence" value="ECO:0007669"/>
    <property type="project" value="UniProtKB-KW"/>
</dbReference>
<dbReference type="GO" id="GO:0071314">
    <property type="term" value="P:cellular response to cocaine"/>
    <property type="evidence" value="ECO:0007669"/>
    <property type="project" value="Ensembl"/>
</dbReference>
<dbReference type="GO" id="GO:0071392">
    <property type="term" value="P:cellular response to estradiol stimulus"/>
    <property type="evidence" value="ECO:0007669"/>
    <property type="project" value="Ensembl"/>
</dbReference>
<dbReference type="GO" id="GO:0071456">
    <property type="term" value="P:cellular response to hypoxia"/>
    <property type="evidence" value="ECO:0007669"/>
    <property type="project" value="Ensembl"/>
</dbReference>
<dbReference type="GO" id="GO:1990314">
    <property type="term" value="P:cellular response to insulin-like growth factor stimulus"/>
    <property type="evidence" value="ECO:0007669"/>
    <property type="project" value="Ensembl"/>
</dbReference>
<dbReference type="GO" id="GO:0044320">
    <property type="term" value="P:cellular response to leptin stimulus"/>
    <property type="evidence" value="ECO:0007669"/>
    <property type="project" value="Ensembl"/>
</dbReference>
<dbReference type="GO" id="GO:0071373">
    <property type="term" value="P:cellular response to luteinizing hormone stimulus"/>
    <property type="evidence" value="ECO:0007669"/>
    <property type="project" value="Ensembl"/>
</dbReference>
<dbReference type="GO" id="GO:0071732">
    <property type="term" value="P:cellular response to nitric oxide"/>
    <property type="evidence" value="ECO:0007669"/>
    <property type="project" value="Ensembl"/>
</dbReference>
<dbReference type="GO" id="GO:0036120">
    <property type="term" value="P:cellular response to platelet-derived growth factor stimulus"/>
    <property type="evidence" value="ECO:0007669"/>
    <property type="project" value="Ensembl"/>
</dbReference>
<dbReference type="GO" id="GO:0090102">
    <property type="term" value="P:cochlea development"/>
    <property type="evidence" value="ECO:0007669"/>
    <property type="project" value="Ensembl"/>
</dbReference>
<dbReference type="GO" id="GO:0006351">
    <property type="term" value="P:DNA-templated transcription"/>
    <property type="evidence" value="ECO:0000315"/>
    <property type="project" value="MGI"/>
</dbReference>
<dbReference type="GO" id="GO:0000082">
    <property type="term" value="P:G1/S transition of mitotic cell cycle"/>
    <property type="evidence" value="ECO:0000303"/>
    <property type="project" value="ComplexPortal"/>
</dbReference>
<dbReference type="GO" id="GO:0000086">
    <property type="term" value="P:G2/M transition of mitotic cell cycle"/>
    <property type="evidence" value="ECO:0000250"/>
    <property type="project" value="UniProtKB"/>
</dbReference>
<dbReference type="GO" id="GO:2000573">
    <property type="term" value="P:positive regulation of DNA biosynthetic process"/>
    <property type="evidence" value="ECO:0007669"/>
    <property type="project" value="Ensembl"/>
</dbReference>
<dbReference type="GO" id="GO:0045893">
    <property type="term" value="P:positive regulation of DNA-templated transcription"/>
    <property type="evidence" value="ECO:0000315"/>
    <property type="project" value="MGI"/>
</dbReference>
<dbReference type="GO" id="GO:0048146">
    <property type="term" value="P:positive regulation of fibroblast proliferation"/>
    <property type="evidence" value="ECO:0007669"/>
    <property type="project" value="Ensembl"/>
</dbReference>
<dbReference type="GO" id="GO:0043687">
    <property type="term" value="P:post-translational protein modification"/>
    <property type="evidence" value="ECO:0007669"/>
    <property type="project" value="Ensembl"/>
</dbReference>
<dbReference type="GO" id="GO:0007265">
    <property type="term" value="P:Ras protein signal transduction"/>
    <property type="evidence" value="ECO:0007669"/>
    <property type="project" value="Ensembl"/>
</dbReference>
<dbReference type="GO" id="GO:0006275">
    <property type="term" value="P:regulation of DNA replication"/>
    <property type="evidence" value="ECO:0000250"/>
    <property type="project" value="UniProtKB"/>
</dbReference>
<dbReference type="GO" id="GO:0033762">
    <property type="term" value="P:response to glucagon"/>
    <property type="evidence" value="ECO:0007669"/>
    <property type="project" value="Ensembl"/>
</dbReference>
<dbReference type="CDD" id="cd20561">
    <property type="entry name" value="CYCLIN_CCNA2_rpt1"/>
    <property type="match status" value="1"/>
</dbReference>
<dbReference type="CDD" id="cd20564">
    <property type="entry name" value="CYCLIN_CCNA2_rpt2"/>
    <property type="match status" value="1"/>
</dbReference>
<dbReference type="FunFam" id="1.10.472.10:FF:000037">
    <property type="entry name" value="Cyclin-A2"/>
    <property type="match status" value="1"/>
</dbReference>
<dbReference type="Gene3D" id="1.10.472.10">
    <property type="entry name" value="Cyclin-like"/>
    <property type="match status" value="2"/>
</dbReference>
<dbReference type="IDEAL" id="IID50253"/>
<dbReference type="InterPro" id="IPR039361">
    <property type="entry name" value="Cyclin"/>
</dbReference>
<dbReference type="InterPro" id="IPR032447">
    <property type="entry name" value="Cyclin-A_N"/>
</dbReference>
<dbReference type="InterPro" id="IPR013763">
    <property type="entry name" value="Cyclin-like_dom"/>
</dbReference>
<dbReference type="InterPro" id="IPR036915">
    <property type="entry name" value="Cyclin-like_sf"/>
</dbReference>
<dbReference type="InterPro" id="IPR046965">
    <property type="entry name" value="Cyclin_A/B-like"/>
</dbReference>
<dbReference type="InterPro" id="IPR004367">
    <property type="entry name" value="Cyclin_C-dom"/>
</dbReference>
<dbReference type="InterPro" id="IPR006671">
    <property type="entry name" value="Cyclin_N"/>
</dbReference>
<dbReference type="InterPro" id="IPR048258">
    <property type="entry name" value="Cyclins_cyclin-box"/>
</dbReference>
<dbReference type="PANTHER" id="PTHR10177">
    <property type="entry name" value="CYCLINS"/>
    <property type="match status" value="1"/>
</dbReference>
<dbReference type="Pfam" id="PF02984">
    <property type="entry name" value="Cyclin_C"/>
    <property type="match status" value="1"/>
</dbReference>
<dbReference type="Pfam" id="PF00134">
    <property type="entry name" value="Cyclin_N"/>
    <property type="match status" value="1"/>
</dbReference>
<dbReference type="Pfam" id="PF16500">
    <property type="entry name" value="Cyclin_N2"/>
    <property type="match status" value="1"/>
</dbReference>
<dbReference type="PIRSF" id="PIRSF001771">
    <property type="entry name" value="Cyclin_A_B_D_E"/>
    <property type="match status" value="1"/>
</dbReference>
<dbReference type="SMART" id="SM00385">
    <property type="entry name" value="CYCLIN"/>
    <property type="match status" value="2"/>
</dbReference>
<dbReference type="SMART" id="SM01332">
    <property type="entry name" value="Cyclin_C"/>
    <property type="match status" value="1"/>
</dbReference>
<dbReference type="SUPFAM" id="SSF47954">
    <property type="entry name" value="Cyclin-like"/>
    <property type="match status" value="2"/>
</dbReference>
<dbReference type="PROSITE" id="PS00292">
    <property type="entry name" value="CYCLINS"/>
    <property type="match status" value="1"/>
</dbReference>
<keyword id="KW-0002">3D-structure</keyword>
<keyword id="KW-0007">Acetylation</keyword>
<keyword id="KW-0131">Cell cycle</keyword>
<keyword id="KW-0132">Cell division</keyword>
<keyword id="KW-0195">Cyclin</keyword>
<keyword id="KW-0963">Cytoplasm</keyword>
<keyword id="KW-0498">Mitosis</keyword>
<keyword id="KW-0539">Nucleus</keyword>
<keyword id="KW-0597">Phosphoprotein</keyword>
<keyword id="KW-1185">Reference proteome</keyword>
<keyword id="KW-0832">Ubl conjugation</keyword>
<feature type="chain" id="PRO_0000080340" description="Cyclin-A2">
    <location>
        <begin position="1"/>
        <end position="422"/>
    </location>
</feature>
<feature type="region of interest" description="Disordered" evidence="2">
    <location>
        <begin position="1"/>
        <end position="62"/>
    </location>
</feature>
<feature type="modified residue" description="N-acetylmethionine" evidence="1">
    <location>
        <position position="1"/>
    </location>
</feature>
<feature type="modified residue" description="Phosphoserine" evidence="1">
    <location>
        <position position="5"/>
    </location>
</feature>
<feature type="sequence conflict" description="In Ref. 1; CAA81331 and 2; CAA53212." evidence="9" ref="1 2">
    <original>G</original>
    <variation>A</variation>
    <location>
        <position position="127"/>
    </location>
</feature>
<feature type="sequence conflict" description="In Ref. 2; CAA53212." evidence="9" ref="2">
    <original>A</original>
    <variation>P</variation>
    <location>
        <position position="391"/>
    </location>
</feature>
<feature type="helix" evidence="11">
    <location>
        <begin position="166"/>
        <end position="182"/>
    </location>
</feature>
<feature type="helix" evidence="11">
    <location>
        <begin position="189"/>
        <end position="192"/>
    </location>
</feature>
<feature type="helix" evidence="11">
    <location>
        <begin position="198"/>
        <end position="214"/>
    </location>
</feature>
<feature type="helix" evidence="11">
    <location>
        <begin position="219"/>
        <end position="235"/>
    </location>
</feature>
<feature type="helix" evidence="11">
    <location>
        <begin position="240"/>
        <end position="242"/>
    </location>
</feature>
<feature type="helix" evidence="11">
    <location>
        <begin position="243"/>
        <end position="258"/>
    </location>
</feature>
<feature type="helix" evidence="11">
    <location>
        <begin position="265"/>
        <end position="271"/>
    </location>
</feature>
<feature type="strand" evidence="11">
    <location>
        <begin position="274"/>
        <end position="276"/>
    </location>
</feature>
<feature type="helix" evidence="11">
    <location>
        <begin position="278"/>
        <end position="291"/>
    </location>
</feature>
<feature type="turn" evidence="11">
    <location>
        <begin position="292"/>
        <end position="294"/>
    </location>
</feature>
<feature type="helix" evidence="11">
    <location>
        <begin position="301"/>
        <end position="308"/>
    </location>
</feature>
<feature type="helix" evidence="11">
    <location>
        <begin position="309"/>
        <end position="311"/>
    </location>
</feature>
<feature type="strand" evidence="11">
    <location>
        <begin position="312"/>
        <end position="314"/>
    </location>
</feature>
<feature type="helix" evidence="11">
    <location>
        <begin position="317"/>
        <end position="332"/>
    </location>
</feature>
<feature type="helix" evidence="11">
    <location>
        <begin position="334"/>
        <end position="337"/>
    </location>
</feature>
<feature type="helix" evidence="11">
    <location>
        <begin position="342"/>
        <end position="358"/>
    </location>
</feature>
<feature type="helix" evidence="11">
    <location>
        <begin position="364"/>
        <end position="370"/>
    </location>
</feature>
<feature type="helix" evidence="11">
    <location>
        <begin position="374"/>
        <end position="390"/>
    </location>
</feature>
<feature type="helix" evidence="11">
    <location>
        <begin position="391"/>
        <end position="393"/>
    </location>
</feature>
<feature type="helix" evidence="11">
    <location>
        <begin position="398"/>
        <end position="402"/>
    </location>
</feature>
<feature type="helix" evidence="11">
    <location>
        <begin position="406"/>
        <end position="408"/>
    </location>
</feature>
<feature type="helix" evidence="11">
    <location>
        <begin position="411"/>
        <end position="413"/>
    </location>
</feature>